<name>PRS53_HUMAN</name>
<accession>Q2L4Q9</accession>
<keyword id="KW-1015">Disulfide bond</keyword>
<keyword id="KW-0378">Hydrolase</keyword>
<keyword id="KW-0645">Protease</keyword>
<keyword id="KW-1267">Proteomics identification</keyword>
<keyword id="KW-1185">Reference proteome</keyword>
<keyword id="KW-0677">Repeat</keyword>
<keyword id="KW-0964">Secreted</keyword>
<keyword id="KW-0720">Serine protease</keyword>
<keyword id="KW-0732">Signal</keyword>
<feature type="signal peptide" evidence="2">
    <location>
        <begin position="1"/>
        <end position="23"/>
    </location>
</feature>
<feature type="chain" id="PRO_0000316763" description="Serine protease 53">
    <location>
        <begin position="24"/>
        <end position="553"/>
    </location>
</feature>
<feature type="domain" description="Peptidase S1 1" evidence="3">
    <location>
        <begin position="24"/>
        <end position="273"/>
    </location>
</feature>
<feature type="domain" description="Peptidase S1 2" evidence="3">
    <location>
        <begin position="294"/>
        <end position="526"/>
    </location>
</feature>
<feature type="region of interest" description="Disordered" evidence="4">
    <location>
        <begin position="27"/>
        <end position="46"/>
    </location>
</feature>
<feature type="active site" description="Charge relay system" evidence="1">
    <location>
        <position position="77"/>
    </location>
</feature>
<feature type="active site" description="Charge relay system" evidence="1">
    <location>
        <position position="128"/>
    </location>
</feature>
<feature type="active site" description="Charge relay system" evidence="1">
    <location>
        <position position="224"/>
    </location>
</feature>
<feature type="active site" description="Charge relay system" evidence="1">
    <location>
        <position position="341"/>
    </location>
</feature>
<feature type="active site" description="Charge relay system" evidence="1">
    <location>
        <position position="382"/>
    </location>
</feature>
<feature type="active site" description="Charge relay system" evidence="1">
    <location>
        <position position="478"/>
    </location>
</feature>
<feature type="disulfide bond" evidence="3">
    <location>
        <begin position="62"/>
        <end position="78"/>
    </location>
</feature>
<feature type="disulfide bond" evidence="3">
    <location>
        <begin position="158"/>
        <end position="230"/>
    </location>
</feature>
<feature type="disulfide bond" evidence="3">
    <location>
        <begin position="187"/>
        <end position="209"/>
    </location>
</feature>
<feature type="disulfide bond" evidence="3">
    <location>
        <begin position="220"/>
        <end position="249"/>
    </location>
</feature>
<feature type="disulfide bond" evidence="3">
    <location>
        <begin position="326"/>
        <end position="342"/>
    </location>
</feature>
<feature type="disulfide bond" evidence="3">
    <location>
        <begin position="444"/>
        <end position="464"/>
    </location>
</feature>
<feature type="disulfide bond" evidence="3">
    <location>
        <begin position="474"/>
        <end position="502"/>
    </location>
</feature>
<gene>
    <name type="primary">PRSS53</name>
</gene>
<reference key="1">
    <citation type="journal article" date="2006" name="BMC Biochem.">
        <title>Identification and characterization of human polyserase-3, a novel protein with tandem serine-protease domains in the same polypeptide chain.</title>
        <authorList>
            <person name="Cal S."/>
            <person name="Peinado J.R."/>
            <person name="Llamazares M."/>
            <person name="Quesada V."/>
            <person name="Moncada-Pazos A."/>
            <person name="Garabaya C."/>
            <person name="Lopez-Otin C."/>
        </authorList>
    </citation>
    <scope>NUCLEOTIDE SEQUENCE [MRNA]</scope>
    <scope>FUNCTION</scope>
    <scope>SUBCELLULAR LOCATION</scope>
    <scope>TISSUE SPECIFICITY</scope>
    <source>
        <tissue>Fetal liver</tissue>
    </source>
</reference>
<proteinExistence type="evidence at protein level"/>
<sequence length="553" mass="58410">MKWCWGPVLLIAGATVLMEGLQAAQRACGQRGPGPPKPQEGNTVPGEWPWQASVRRQGAHICSGSLVADTWVLTAAHCFEKAAATELNSWSVVLGSLQREGLSPGAEEVGVAALQLPRAYNHYSQGSDLALLQLAHPTTHTPLCLPQPAHRFPFGASCWATGWDQDTSDAPGTLRNLRLRLISRPTCNCIYNQLHQRHLSNPARPGMLCGGPQPGVQGPCQGDSGGPVLCLEPDGHWVQAGIISFASSCAQEDAPVLLTNTAAHSSWLQARVQGAAFLAQSPETPEMSDEDSCVACGSLRTAGPQAGAPSPWPWEARLMHQGQLACGGALVSEEAVLTAAHCFIGRQAPEEWSVGLGTRPEEWGLKQLILHGAYTHPEGGYDMALLLLAQPVTLGASLRPLCLPYPDHHLPDGERGWVLGRARPGAGISSLQTVPVTLLGPRACSRLHAAPGGDGSPILPGMVCTSAVGELPSCEGLSGAPLVHEVRGTWFLAGLHSFGDACQGPARPAVFTALPAYEDWVSSLDWQVYFAEEPEPEAEPGSCLANISQPTSC</sequence>
<protein>
    <recommendedName>
        <fullName>Serine protease 53</fullName>
        <ecNumber>3.4.21.-</ecNumber>
    </recommendedName>
    <alternativeName>
        <fullName>Polyserine protease 3</fullName>
        <shortName>Polyserase-3</shortName>
    </alternativeName>
</protein>
<dbReference type="EC" id="3.4.21.-"/>
<dbReference type="EMBL" id="AJ627035">
    <property type="protein sequence ID" value="CAF25304.1"/>
    <property type="molecule type" value="mRNA"/>
</dbReference>
<dbReference type="CCDS" id="CCDS42153.1"/>
<dbReference type="RefSeq" id="NP_001034592.1">
    <property type="nucleotide sequence ID" value="NM_001039503.3"/>
</dbReference>
<dbReference type="SMR" id="Q2L4Q9"/>
<dbReference type="BioGRID" id="396747">
    <property type="interactions" value="133"/>
</dbReference>
<dbReference type="FunCoup" id="Q2L4Q9">
    <property type="interactions" value="5"/>
</dbReference>
<dbReference type="IntAct" id="Q2L4Q9">
    <property type="interactions" value="2"/>
</dbReference>
<dbReference type="STRING" id="9606.ENSP00000280606"/>
<dbReference type="MEROPS" id="S01.375"/>
<dbReference type="BioMuta" id="PRSS53"/>
<dbReference type="DMDM" id="121941263"/>
<dbReference type="MassIVE" id="Q2L4Q9"/>
<dbReference type="PaxDb" id="9606-ENSP00000280606"/>
<dbReference type="PeptideAtlas" id="Q2L4Q9"/>
<dbReference type="ProteomicsDB" id="61328"/>
<dbReference type="Antibodypedia" id="50883">
    <property type="antibodies" value="28 antibodies from 8 providers"/>
</dbReference>
<dbReference type="DNASU" id="339105"/>
<dbReference type="Ensembl" id="ENST00000280606.7">
    <property type="protein sequence ID" value="ENSP00000280606.6"/>
    <property type="gene ID" value="ENSG00000151006.8"/>
</dbReference>
<dbReference type="GeneID" id="339105"/>
<dbReference type="KEGG" id="hsa:339105"/>
<dbReference type="MANE-Select" id="ENST00000280606.7">
    <property type="protein sequence ID" value="ENSP00000280606.6"/>
    <property type="RefSeq nucleotide sequence ID" value="NM_001039503.3"/>
    <property type="RefSeq protein sequence ID" value="NP_001034592.1"/>
</dbReference>
<dbReference type="UCSC" id="uc002eaq.4">
    <property type="organism name" value="human"/>
</dbReference>
<dbReference type="AGR" id="HGNC:34407"/>
<dbReference type="CTD" id="339105"/>
<dbReference type="DisGeNET" id="339105"/>
<dbReference type="GeneCards" id="PRSS53"/>
<dbReference type="HGNC" id="HGNC:34407">
    <property type="gene designation" value="PRSS53"/>
</dbReference>
<dbReference type="HPA" id="ENSG00000151006">
    <property type="expression patterns" value="Tissue enhanced (liver)"/>
</dbReference>
<dbReference type="MIM" id="610561">
    <property type="type" value="gene"/>
</dbReference>
<dbReference type="neXtProt" id="NX_Q2L4Q9"/>
<dbReference type="OpenTargets" id="ENSG00000151006"/>
<dbReference type="PharmGKB" id="PA165450635"/>
<dbReference type="VEuPathDB" id="HostDB:ENSG00000151006"/>
<dbReference type="eggNOG" id="KOG3627">
    <property type="taxonomic scope" value="Eukaryota"/>
</dbReference>
<dbReference type="GeneTree" id="ENSGT00940000162122"/>
<dbReference type="HOGENOM" id="CLU_004497_4_0_1"/>
<dbReference type="InParanoid" id="Q2L4Q9"/>
<dbReference type="OMA" id="SYMCTGC"/>
<dbReference type="OrthoDB" id="9006044at2759"/>
<dbReference type="PAN-GO" id="Q2L4Q9">
    <property type="GO annotations" value="1 GO annotation based on evolutionary models"/>
</dbReference>
<dbReference type="PhylomeDB" id="Q2L4Q9"/>
<dbReference type="TreeFam" id="TF321170"/>
<dbReference type="PathwayCommons" id="Q2L4Q9"/>
<dbReference type="SignaLink" id="Q2L4Q9"/>
<dbReference type="BioGRID-ORCS" id="339105">
    <property type="hits" value="13 hits in 1152 CRISPR screens"/>
</dbReference>
<dbReference type="ChiTaRS" id="PRSS53">
    <property type="organism name" value="human"/>
</dbReference>
<dbReference type="GenomeRNAi" id="339105"/>
<dbReference type="Pharos" id="Q2L4Q9">
    <property type="development level" value="Tdark"/>
</dbReference>
<dbReference type="PRO" id="PR:Q2L4Q9"/>
<dbReference type="Proteomes" id="UP000005640">
    <property type="component" value="Chromosome 16"/>
</dbReference>
<dbReference type="RNAct" id="Q2L4Q9">
    <property type="molecule type" value="protein"/>
</dbReference>
<dbReference type="Bgee" id="ENSG00000151006">
    <property type="expression patterns" value="Expressed in right lobe of liver and 91 other cell types or tissues"/>
</dbReference>
<dbReference type="GO" id="GO:0005576">
    <property type="term" value="C:extracellular region"/>
    <property type="evidence" value="ECO:0007669"/>
    <property type="project" value="UniProtKB-SubCell"/>
</dbReference>
<dbReference type="GO" id="GO:0004252">
    <property type="term" value="F:serine-type endopeptidase activity"/>
    <property type="evidence" value="ECO:0000318"/>
    <property type="project" value="GO_Central"/>
</dbReference>
<dbReference type="GO" id="GO:0006508">
    <property type="term" value="P:proteolysis"/>
    <property type="evidence" value="ECO:0007669"/>
    <property type="project" value="UniProtKB-KW"/>
</dbReference>
<dbReference type="CDD" id="cd00190">
    <property type="entry name" value="Tryp_SPc"/>
    <property type="match status" value="2"/>
</dbReference>
<dbReference type="FunFam" id="2.40.10.10:FF:000024">
    <property type="entry name" value="Serine protease 53"/>
    <property type="match status" value="1"/>
</dbReference>
<dbReference type="FunFam" id="2.40.10.10:FF:000079">
    <property type="entry name" value="Serine protease 53"/>
    <property type="match status" value="1"/>
</dbReference>
<dbReference type="Gene3D" id="2.40.10.10">
    <property type="entry name" value="Trypsin-like serine proteases"/>
    <property type="match status" value="2"/>
</dbReference>
<dbReference type="InterPro" id="IPR009003">
    <property type="entry name" value="Peptidase_S1_PA"/>
</dbReference>
<dbReference type="InterPro" id="IPR043504">
    <property type="entry name" value="Peptidase_S1_PA_chymotrypsin"/>
</dbReference>
<dbReference type="InterPro" id="IPR001314">
    <property type="entry name" value="Peptidase_S1A"/>
</dbReference>
<dbReference type="InterPro" id="IPR001254">
    <property type="entry name" value="Trypsin_dom"/>
</dbReference>
<dbReference type="InterPro" id="IPR018114">
    <property type="entry name" value="TRYPSIN_HIS"/>
</dbReference>
<dbReference type="InterPro" id="IPR033116">
    <property type="entry name" value="TRYPSIN_SER"/>
</dbReference>
<dbReference type="PANTHER" id="PTHR24253:SF58">
    <property type="entry name" value="SERINE PROTEASE 33"/>
    <property type="match status" value="1"/>
</dbReference>
<dbReference type="PANTHER" id="PTHR24253">
    <property type="entry name" value="TRANSMEMBRANE PROTEASE SERINE"/>
    <property type="match status" value="1"/>
</dbReference>
<dbReference type="Pfam" id="PF00089">
    <property type="entry name" value="Trypsin"/>
    <property type="match status" value="2"/>
</dbReference>
<dbReference type="PRINTS" id="PR00722">
    <property type="entry name" value="CHYMOTRYPSIN"/>
</dbReference>
<dbReference type="SMART" id="SM00020">
    <property type="entry name" value="Tryp_SPc"/>
    <property type="match status" value="2"/>
</dbReference>
<dbReference type="SUPFAM" id="SSF50494">
    <property type="entry name" value="Trypsin-like serine proteases"/>
    <property type="match status" value="2"/>
</dbReference>
<dbReference type="PROSITE" id="PS50240">
    <property type="entry name" value="TRYPSIN_DOM"/>
    <property type="match status" value="2"/>
</dbReference>
<dbReference type="PROSITE" id="PS00134">
    <property type="entry name" value="TRYPSIN_HIS"/>
    <property type="match status" value="2"/>
</dbReference>
<dbReference type="PROSITE" id="PS00135">
    <property type="entry name" value="TRYPSIN_SER"/>
    <property type="match status" value="1"/>
</dbReference>
<organism>
    <name type="scientific">Homo sapiens</name>
    <name type="common">Human</name>
    <dbReference type="NCBI Taxonomy" id="9606"/>
    <lineage>
        <taxon>Eukaryota</taxon>
        <taxon>Metazoa</taxon>
        <taxon>Chordata</taxon>
        <taxon>Craniata</taxon>
        <taxon>Vertebrata</taxon>
        <taxon>Euteleostomi</taxon>
        <taxon>Mammalia</taxon>
        <taxon>Eutheria</taxon>
        <taxon>Euarchontoglires</taxon>
        <taxon>Primates</taxon>
        <taxon>Haplorrhini</taxon>
        <taxon>Catarrhini</taxon>
        <taxon>Hominidae</taxon>
        <taxon>Homo</taxon>
    </lineage>
</organism>
<comment type="function">
    <text evidence="5">In vitro can degrade the fibrinogen alpha chain of as well as pro-urokinase-type plasminogen activator.</text>
</comment>
<comment type="interaction">
    <interactant intactId="EBI-18393698">
        <id>Q2L4Q9</id>
    </interactant>
    <interactant intactId="EBI-2514383">
        <id>Q5T6F2</id>
        <label>UBAP2</label>
    </interactant>
    <organismsDiffer>false</organismsDiffer>
    <experiments>3</experiments>
</comment>
<comment type="subcellular location">
    <subcellularLocation>
        <location evidence="5">Secreted</location>
    </subcellularLocation>
</comment>
<comment type="tissue specificity">
    <text evidence="5">Predominantly detected in testis, liver, heart and ovary, as well as in several tumor cell lines.</text>
</comment>
<comment type="similarity">
    <text evidence="3">Belongs to the peptidase S1 family.</text>
</comment>
<evidence type="ECO:0000250" key="1"/>
<evidence type="ECO:0000255" key="2"/>
<evidence type="ECO:0000255" key="3">
    <source>
        <dbReference type="PROSITE-ProRule" id="PRU00274"/>
    </source>
</evidence>
<evidence type="ECO:0000256" key="4">
    <source>
        <dbReference type="SAM" id="MobiDB-lite"/>
    </source>
</evidence>
<evidence type="ECO:0000269" key="5">
    <source>
    </source>
</evidence>